<comment type="function">
    <text evidence="1">Catalyzes the reversible cyclization of carbamoyl aspartate to dihydroorotate.</text>
</comment>
<comment type="catalytic activity">
    <reaction evidence="1">
        <text>(S)-dihydroorotate + H2O = N-carbamoyl-L-aspartate + H(+)</text>
        <dbReference type="Rhea" id="RHEA:24296"/>
        <dbReference type="ChEBI" id="CHEBI:15377"/>
        <dbReference type="ChEBI" id="CHEBI:15378"/>
        <dbReference type="ChEBI" id="CHEBI:30864"/>
        <dbReference type="ChEBI" id="CHEBI:32814"/>
        <dbReference type="EC" id="3.5.2.3"/>
    </reaction>
</comment>
<comment type="cofactor">
    <cofactor evidence="1">
        <name>Zn(2+)</name>
        <dbReference type="ChEBI" id="CHEBI:29105"/>
    </cofactor>
    <text evidence="1">Binds 2 Zn(2+) ions per subunit.</text>
</comment>
<comment type="pathway">
    <text evidence="1">Pyrimidine metabolism; UMP biosynthesis via de novo pathway; (S)-dihydroorotate from bicarbonate: step 3/3.</text>
</comment>
<comment type="similarity">
    <text evidence="1">Belongs to the metallo-dependent hydrolases superfamily. DHOase family. Class I DHOase subfamily.</text>
</comment>
<dbReference type="EC" id="3.5.2.3" evidence="1"/>
<dbReference type="EMBL" id="AE009951">
    <property type="protein sequence ID" value="AAL94623.1"/>
    <property type="molecule type" value="Genomic_DNA"/>
</dbReference>
<dbReference type="RefSeq" id="NP_603324.1">
    <property type="nucleotide sequence ID" value="NC_003454.1"/>
</dbReference>
<dbReference type="RefSeq" id="WP_011016377.1">
    <property type="nucleotide sequence ID" value="NZ_OZ209243.1"/>
</dbReference>
<dbReference type="SMR" id="Q8RG88"/>
<dbReference type="FunCoup" id="Q8RG88">
    <property type="interactions" value="227"/>
</dbReference>
<dbReference type="STRING" id="190304.FN0420"/>
<dbReference type="PaxDb" id="190304-FN0420"/>
<dbReference type="EnsemblBacteria" id="AAL94623">
    <property type="protein sequence ID" value="AAL94623"/>
    <property type="gene ID" value="FN0420"/>
</dbReference>
<dbReference type="KEGG" id="fnu:FN0420"/>
<dbReference type="PATRIC" id="fig|190304.8.peg.997"/>
<dbReference type="eggNOG" id="COG0044">
    <property type="taxonomic scope" value="Bacteria"/>
</dbReference>
<dbReference type="HOGENOM" id="CLU_015572_1_0_0"/>
<dbReference type="InParanoid" id="Q8RG88"/>
<dbReference type="BioCyc" id="FNUC190304:G1FZS-1014-MONOMER"/>
<dbReference type="UniPathway" id="UPA00070">
    <property type="reaction ID" value="UER00117"/>
</dbReference>
<dbReference type="Proteomes" id="UP000002521">
    <property type="component" value="Chromosome"/>
</dbReference>
<dbReference type="GO" id="GO:0005737">
    <property type="term" value="C:cytoplasm"/>
    <property type="evidence" value="ECO:0000318"/>
    <property type="project" value="GO_Central"/>
</dbReference>
<dbReference type="GO" id="GO:0004038">
    <property type="term" value="F:allantoinase activity"/>
    <property type="evidence" value="ECO:0000318"/>
    <property type="project" value="GO_Central"/>
</dbReference>
<dbReference type="GO" id="GO:0004151">
    <property type="term" value="F:dihydroorotase activity"/>
    <property type="evidence" value="ECO:0007669"/>
    <property type="project" value="UniProtKB-UniRule"/>
</dbReference>
<dbReference type="GO" id="GO:0008270">
    <property type="term" value="F:zinc ion binding"/>
    <property type="evidence" value="ECO:0007669"/>
    <property type="project" value="UniProtKB-UniRule"/>
</dbReference>
<dbReference type="GO" id="GO:0044205">
    <property type="term" value="P:'de novo' UMP biosynthetic process"/>
    <property type="evidence" value="ECO:0007669"/>
    <property type="project" value="UniProtKB-UniRule"/>
</dbReference>
<dbReference type="GO" id="GO:0006145">
    <property type="term" value="P:purine nucleobase catabolic process"/>
    <property type="evidence" value="ECO:0000318"/>
    <property type="project" value="GO_Central"/>
</dbReference>
<dbReference type="CDD" id="cd01317">
    <property type="entry name" value="DHOase_IIa"/>
    <property type="match status" value="1"/>
</dbReference>
<dbReference type="Gene3D" id="3.20.20.140">
    <property type="entry name" value="Metal-dependent hydrolases"/>
    <property type="match status" value="1"/>
</dbReference>
<dbReference type="Gene3D" id="2.30.40.10">
    <property type="entry name" value="Urease, subunit C, domain 1"/>
    <property type="match status" value="2"/>
</dbReference>
<dbReference type="HAMAP" id="MF_00220_B">
    <property type="entry name" value="PyrC_classI_B"/>
    <property type="match status" value="1"/>
</dbReference>
<dbReference type="InterPro" id="IPR006680">
    <property type="entry name" value="Amidohydro-rel"/>
</dbReference>
<dbReference type="InterPro" id="IPR004722">
    <property type="entry name" value="DHOase"/>
</dbReference>
<dbReference type="InterPro" id="IPR050138">
    <property type="entry name" value="DHOase/Allantoinase_Hydrolase"/>
</dbReference>
<dbReference type="InterPro" id="IPR002195">
    <property type="entry name" value="Dihydroorotase_CS"/>
</dbReference>
<dbReference type="InterPro" id="IPR011059">
    <property type="entry name" value="Metal-dep_hydrolase_composite"/>
</dbReference>
<dbReference type="InterPro" id="IPR032466">
    <property type="entry name" value="Metal_Hydrolase"/>
</dbReference>
<dbReference type="NCBIfam" id="NF006837">
    <property type="entry name" value="PRK09357.1-2"/>
    <property type="match status" value="1"/>
</dbReference>
<dbReference type="NCBIfam" id="TIGR00857">
    <property type="entry name" value="pyrC_multi"/>
    <property type="match status" value="1"/>
</dbReference>
<dbReference type="PANTHER" id="PTHR43668">
    <property type="entry name" value="ALLANTOINASE"/>
    <property type="match status" value="1"/>
</dbReference>
<dbReference type="PANTHER" id="PTHR43668:SF2">
    <property type="entry name" value="ALLANTOINASE"/>
    <property type="match status" value="1"/>
</dbReference>
<dbReference type="Pfam" id="PF01979">
    <property type="entry name" value="Amidohydro_1"/>
    <property type="match status" value="1"/>
</dbReference>
<dbReference type="SUPFAM" id="SSF51338">
    <property type="entry name" value="Composite domain of metallo-dependent hydrolases"/>
    <property type="match status" value="1"/>
</dbReference>
<dbReference type="SUPFAM" id="SSF51556">
    <property type="entry name" value="Metallo-dependent hydrolases"/>
    <property type="match status" value="1"/>
</dbReference>
<dbReference type="PROSITE" id="PS00483">
    <property type="entry name" value="DIHYDROOROTASE_2"/>
    <property type="match status" value="1"/>
</dbReference>
<accession>Q8RG88</accession>
<name>PYRC_FUSNN</name>
<gene>
    <name evidence="1" type="primary">pyrC</name>
    <name type="ordered locus">FN0420</name>
</gene>
<proteinExistence type="inferred from homology"/>
<evidence type="ECO:0000255" key="1">
    <source>
        <dbReference type="HAMAP-Rule" id="MF_00220"/>
    </source>
</evidence>
<sequence>MLLKNCKILKNTKFEKVDILIRDNKIEKISENIDITDENIIDIKNRFVTAGFIDVHVHWREPGFSKKETVYTASRAAARGGFTTVMTMPNLNPVPDSVETLNKQLEIIKKDSVIRAIPYGAITKEEYGRELSDMEAIASNVFAFTDDGRGVQSANVMYEAMLMGAKLNKAIVAHCEDNSLIRGGAMHEGKRSAELGIKGIPSICESTQIVRDVLLAEAANCHYHVCHISAKESVRAVREGKKNGIKVTCEVTPHHLLSCDEDIKEDNGMWKMNPPLRSREDRNALIVGILDGTIDIIATDHAPHTMEEKIRGIEKSSFGIVGSETAFAQLYTKFVKTDIFSLEMLVKLMSENVAKIFDLPYGKLEENSFADIVVIDLEKEITINPNNFLSKGKNTPYINEKINGIPVLTISNGKIAYIDKEEINL</sequence>
<keyword id="KW-0378">Hydrolase</keyword>
<keyword id="KW-0479">Metal-binding</keyword>
<keyword id="KW-0665">Pyrimidine biosynthesis</keyword>
<keyword id="KW-1185">Reference proteome</keyword>
<keyword id="KW-0862">Zinc</keyword>
<organism>
    <name type="scientific">Fusobacterium nucleatum subsp. nucleatum (strain ATCC 25586 / DSM 15643 / BCRC 10681 / CIP 101130 / JCM 8532 / KCTC 2640 / LMG 13131 / VPI 4355)</name>
    <dbReference type="NCBI Taxonomy" id="190304"/>
    <lineage>
        <taxon>Bacteria</taxon>
        <taxon>Fusobacteriati</taxon>
        <taxon>Fusobacteriota</taxon>
        <taxon>Fusobacteriia</taxon>
        <taxon>Fusobacteriales</taxon>
        <taxon>Fusobacteriaceae</taxon>
        <taxon>Fusobacterium</taxon>
    </lineage>
</organism>
<feature type="chain" id="PRO_0000147234" description="Dihydroorotase">
    <location>
        <begin position="1"/>
        <end position="425"/>
    </location>
</feature>
<feature type="active site" evidence="1">
    <location>
        <position position="300"/>
    </location>
</feature>
<feature type="binding site" evidence="1">
    <location>
        <position position="56"/>
    </location>
    <ligand>
        <name>Zn(2+)</name>
        <dbReference type="ChEBI" id="CHEBI:29105"/>
        <label>1</label>
    </ligand>
</feature>
<feature type="binding site" evidence="1">
    <location>
        <begin position="58"/>
        <end position="60"/>
    </location>
    <ligand>
        <name>substrate</name>
    </ligand>
</feature>
<feature type="binding site" evidence="1">
    <location>
        <position position="58"/>
    </location>
    <ligand>
        <name>Zn(2+)</name>
        <dbReference type="ChEBI" id="CHEBI:29105"/>
        <label>1</label>
    </ligand>
</feature>
<feature type="binding site" evidence="1">
    <location>
        <position position="90"/>
    </location>
    <ligand>
        <name>substrate</name>
    </ligand>
</feature>
<feature type="binding site" evidence="1">
    <location>
        <position position="147"/>
    </location>
    <ligand>
        <name>Zn(2+)</name>
        <dbReference type="ChEBI" id="CHEBI:29105"/>
        <label>1</label>
    </ligand>
</feature>
<feature type="binding site" evidence="1">
    <location>
        <position position="147"/>
    </location>
    <ligand>
        <name>Zn(2+)</name>
        <dbReference type="ChEBI" id="CHEBI:29105"/>
        <label>2</label>
    </ligand>
</feature>
<feature type="binding site" evidence="1">
    <location>
        <position position="174"/>
    </location>
    <ligand>
        <name>Zn(2+)</name>
        <dbReference type="ChEBI" id="CHEBI:29105"/>
        <label>2</label>
    </ligand>
</feature>
<feature type="binding site" evidence="1">
    <location>
        <position position="227"/>
    </location>
    <ligand>
        <name>Zn(2+)</name>
        <dbReference type="ChEBI" id="CHEBI:29105"/>
        <label>2</label>
    </ligand>
</feature>
<feature type="binding site" evidence="1">
    <location>
        <position position="273"/>
    </location>
    <ligand>
        <name>substrate</name>
    </ligand>
</feature>
<feature type="binding site" evidence="1">
    <location>
        <position position="300"/>
    </location>
    <ligand>
        <name>Zn(2+)</name>
        <dbReference type="ChEBI" id="CHEBI:29105"/>
        <label>1</label>
    </ligand>
</feature>
<feature type="binding site" evidence="1">
    <location>
        <position position="304"/>
    </location>
    <ligand>
        <name>substrate</name>
    </ligand>
</feature>
<feature type="binding site" evidence="1">
    <location>
        <begin position="318"/>
        <end position="319"/>
    </location>
    <ligand>
        <name>substrate</name>
    </ligand>
</feature>
<reference key="1">
    <citation type="journal article" date="2002" name="J. Bacteriol.">
        <title>Genome sequence and analysis of the oral bacterium Fusobacterium nucleatum strain ATCC 25586.</title>
        <authorList>
            <person name="Kapatral V."/>
            <person name="Anderson I."/>
            <person name="Ivanova N."/>
            <person name="Reznik G."/>
            <person name="Los T."/>
            <person name="Lykidis A."/>
            <person name="Bhattacharyya A."/>
            <person name="Bartman A."/>
            <person name="Gardner W."/>
            <person name="Grechkin G."/>
            <person name="Zhu L."/>
            <person name="Vasieva O."/>
            <person name="Chu L."/>
            <person name="Kogan Y."/>
            <person name="Chaga O."/>
            <person name="Goltsman E."/>
            <person name="Bernal A."/>
            <person name="Larsen N."/>
            <person name="D'Souza M."/>
            <person name="Walunas T."/>
            <person name="Pusch G."/>
            <person name="Haselkorn R."/>
            <person name="Fonstein M."/>
            <person name="Kyrpides N.C."/>
            <person name="Overbeek R."/>
        </authorList>
    </citation>
    <scope>NUCLEOTIDE SEQUENCE [LARGE SCALE GENOMIC DNA]</scope>
    <source>
        <strain>ATCC 25586 / DSM 15643 / BCRC 10681 / CIP 101130 / JCM 8532 / KCTC 2640 / LMG 13131 / VPI 4355</strain>
    </source>
</reference>
<protein>
    <recommendedName>
        <fullName evidence="1">Dihydroorotase</fullName>
        <shortName evidence="1">DHOase</shortName>
        <ecNumber evidence="1">3.5.2.3</ecNumber>
    </recommendedName>
</protein>